<reference key="1">
    <citation type="journal article" date="2005" name="J. Bacteriol.">
        <title>Swine and poultry pathogens: the complete genome sequences of two strains of Mycoplasma hyopneumoniae and a strain of Mycoplasma synoviae.</title>
        <authorList>
            <person name="Vasconcelos A.T.R."/>
            <person name="Ferreira H.B."/>
            <person name="Bizarro C.V."/>
            <person name="Bonatto S.L."/>
            <person name="Carvalho M.O."/>
            <person name="Pinto P.M."/>
            <person name="Almeida D.F."/>
            <person name="Almeida L.G.P."/>
            <person name="Almeida R."/>
            <person name="Alves-Junior L."/>
            <person name="Assuncao E.N."/>
            <person name="Azevedo V.A.C."/>
            <person name="Bogo M.R."/>
            <person name="Brigido M.M."/>
            <person name="Brocchi M."/>
            <person name="Burity H.A."/>
            <person name="Camargo A.A."/>
            <person name="Camargo S.S."/>
            <person name="Carepo M.S."/>
            <person name="Carraro D.M."/>
            <person name="de Mattos Cascardo J.C."/>
            <person name="Castro L.A."/>
            <person name="Cavalcanti G."/>
            <person name="Chemale G."/>
            <person name="Collevatti R.G."/>
            <person name="Cunha C.W."/>
            <person name="Dallagiovanna B."/>
            <person name="Dambros B.P."/>
            <person name="Dellagostin O.A."/>
            <person name="Falcao C."/>
            <person name="Fantinatti-Garboggini F."/>
            <person name="Felipe M.S.S."/>
            <person name="Fiorentin L."/>
            <person name="Franco G.R."/>
            <person name="Freitas N.S.A."/>
            <person name="Frias D."/>
            <person name="Grangeiro T.B."/>
            <person name="Grisard E.C."/>
            <person name="Guimaraes C.T."/>
            <person name="Hungria M."/>
            <person name="Jardim S.N."/>
            <person name="Krieger M.A."/>
            <person name="Laurino J.P."/>
            <person name="Lima L.F.A."/>
            <person name="Lopes M.I."/>
            <person name="Loreto E.L.S."/>
            <person name="Madeira H.M.F."/>
            <person name="Manfio G.P."/>
            <person name="Maranhao A.Q."/>
            <person name="Martinkovics C.T."/>
            <person name="Medeiros S.R.B."/>
            <person name="Moreira M.A.M."/>
            <person name="Neiva M."/>
            <person name="Ramalho-Neto C.E."/>
            <person name="Nicolas M.F."/>
            <person name="Oliveira S.C."/>
            <person name="Paixao R.F.C."/>
            <person name="Pedrosa F.O."/>
            <person name="Pena S.D.J."/>
            <person name="Pereira M."/>
            <person name="Pereira-Ferrari L."/>
            <person name="Piffer I."/>
            <person name="Pinto L.S."/>
            <person name="Potrich D.P."/>
            <person name="Salim A.C.M."/>
            <person name="Santos F.R."/>
            <person name="Schmitt R."/>
            <person name="Schneider M.P.C."/>
            <person name="Schrank A."/>
            <person name="Schrank I.S."/>
            <person name="Schuck A.F."/>
            <person name="Seuanez H.N."/>
            <person name="Silva D.W."/>
            <person name="Silva R."/>
            <person name="Silva S.C."/>
            <person name="Soares C.M.A."/>
            <person name="Souza K.R.L."/>
            <person name="Souza R.C."/>
            <person name="Staats C.C."/>
            <person name="Steffens M.B.R."/>
            <person name="Teixeira S.M.R."/>
            <person name="Urmenyi T.P."/>
            <person name="Vainstein M.H."/>
            <person name="Zuccherato L.W."/>
            <person name="Simpson A.J.G."/>
            <person name="Zaha A."/>
        </authorList>
    </citation>
    <scope>NUCLEOTIDE SEQUENCE [LARGE SCALE GENOMIC DNA]</scope>
    <source>
        <strain>7448</strain>
    </source>
</reference>
<accession>Q4A902</accession>
<feature type="chain" id="PRO_1000010425" description="Heat-inducible transcription repressor HrcA">
    <location>
        <begin position="1"/>
        <end position="335"/>
    </location>
</feature>
<name>HRCA_MESH7</name>
<evidence type="ECO:0000255" key="1">
    <source>
        <dbReference type="HAMAP-Rule" id="MF_00081"/>
    </source>
</evidence>
<comment type="function">
    <text evidence="1">Negative regulator of class I heat shock genes (grpE-dnaK-dnaJ and groELS operons). Prevents heat-shock induction of these operons.</text>
</comment>
<comment type="similarity">
    <text evidence="1">Belongs to the HrcA family.</text>
</comment>
<protein>
    <recommendedName>
        <fullName evidence="1">Heat-inducible transcription repressor HrcA</fullName>
    </recommendedName>
</protein>
<sequence>MPKLDSKKEKYLKQIVENFIKTGESIGSLNLKQSYGIKKSPSYLRAIMNQLEKEGFLEKSHSSSGRIPTLQGFQYYAEFLSFDENENLANKLKDLFARRRINIENTISEAVKLISESVGTTLIATTNNENERLMSINLTQISQNEGIIVVVSSSGNVENKKITFSEQIPRQDVKIAIRLFQERLINTPLLEISSKLAILKQELEKQIKHSDELLHHFMEKIFNFQVQNKSNIYNKNSLILDKEISRAKLVDLLYIIEKKSIWEMLEDRTTKDDDTLKISIKSPEVSFISKKFEKFLPIKEISMVGAAKKINYSAARTGIKLLEDFLSNKSKIRKG</sequence>
<gene>
    <name evidence="1" type="primary">hrcA</name>
    <name type="ordered locus">MHP7448_0010</name>
</gene>
<keyword id="KW-0678">Repressor</keyword>
<keyword id="KW-0346">Stress response</keyword>
<keyword id="KW-0804">Transcription</keyword>
<keyword id="KW-0805">Transcription regulation</keyword>
<proteinExistence type="inferred from homology"/>
<organism>
    <name type="scientific">Mesomycoplasma hyopneumoniae (strain 7448)</name>
    <name type="common">Mycoplasma hyopneumoniae</name>
    <dbReference type="NCBI Taxonomy" id="262722"/>
    <lineage>
        <taxon>Bacteria</taxon>
        <taxon>Bacillati</taxon>
        <taxon>Mycoplasmatota</taxon>
        <taxon>Mycoplasmoidales</taxon>
        <taxon>Metamycoplasmataceae</taxon>
        <taxon>Mesomycoplasma</taxon>
    </lineage>
</organism>
<dbReference type="EMBL" id="AE017244">
    <property type="protein sequence ID" value="AAZ53387.1"/>
    <property type="molecule type" value="Genomic_DNA"/>
</dbReference>
<dbReference type="RefSeq" id="WP_011205849.1">
    <property type="nucleotide sequence ID" value="NC_007332.1"/>
</dbReference>
<dbReference type="SMR" id="Q4A902"/>
<dbReference type="KEGG" id="mhp:MHP7448_0010"/>
<dbReference type="HOGENOM" id="CLU_050019_1_0_14"/>
<dbReference type="Proteomes" id="UP000000553">
    <property type="component" value="Chromosome"/>
</dbReference>
<dbReference type="GO" id="GO:0003677">
    <property type="term" value="F:DNA binding"/>
    <property type="evidence" value="ECO:0007669"/>
    <property type="project" value="InterPro"/>
</dbReference>
<dbReference type="GO" id="GO:0045892">
    <property type="term" value="P:negative regulation of DNA-templated transcription"/>
    <property type="evidence" value="ECO:0007669"/>
    <property type="project" value="UniProtKB-UniRule"/>
</dbReference>
<dbReference type="Gene3D" id="1.10.10.10">
    <property type="entry name" value="Winged helix-like DNA-binding domain superfamily/Winged helix DNA-binding domain"/>
    <property type="match status" value="1"/>
</dbReference>
<dbReference type="HAMAP" id="MF_00081">
    <property type="entry name" value="HrcA"/>
    <property type="match status" value="1"/>
</dbReference>
<dbReference type="InterPro" id="IPR002571">
    <property type="entry name" value="HrcA"/>
</dbReference>
<dbReference type="InterPro" id="IPR021153">
    <property type="entry name" value="HrcA_C"/>
</dbReference>
<dbReference type="InterPro" id="IPR036388">
    <property type="entry name" value="WH-like_DNA-bd_sf"/>
</dbReference>
<dbReference type="InterPro" id="IPR036390">
    <property type="entry name" value="WH_DNA-bd_sf"/>
</dbReference>
<dbReference type="PANTHER" id="PTHR34824">
    <property type="entry name" value="HEAT-INDUCIBLE TRANSCRIPTION REPRESSOR HRCA"/>
    <property type="match status" value="1"/>
</dbReference>
<dbReference type="PANTHER" id="PTHR34824:SF1">
    <property type="entry name" value="HEAT-INDUCIBLE TRANSCRIPTION REPRESSOR HRCA"/>
    <property type="match status" value="1"/>
</dbReference>
<dbReference type="Pfam" id="PF01628">
    <property type="entry name" value="HrcA"/>
    <property type="match status" value="1"/>
</dbReference>
<dbReference type="PIRSF" id="PIRSF005485">
    <property type="entry name" value="HrcA"/>
    <property type="match status" value="1"/>
</dbReference>
<dbReference type="SUPFAM" id="SSF55781">
    <property type="entry name" value="GAF domain-like"/>
    <property type="match status" value="1"/>
</dbReference>
<dbReference type="SUPFAM" id="SSF46785">
    <property type="entry name" value="Winged helix' DNA-binding domain"/>
    <property type="match status" value="1"/>
</dbReference>